<gene>
    <name evidence="1" type="primary">rplP</name>
    <name type="ordered locus">Bind_1361</name>
</gene>
<feature type="chain" id="PRO_1000142927" description="Large ribosomal subunit protein uL16">
    <location>
        <begin position="1"/>
        <end position="137"/>
    </location>
</feature>
<accession>B2IK69</accession>
<comment type="function">
    <text evidence="1">Binds 23S rRNA and is also seen to make contacts with the A and possibly P site tRNAs.</text>
</comment>
<comment type="subunit">
    <text evidence="1">Part of the 50S ribosomal subunit.</text>
</comment>
<comment type="similarity">
    <text evidence="1">Belongs to the universal ribosomal protein uL16 family.</text>
</comment>
<keyword id="KW-1185">Reference proteome</keyword>
<keyword id="KW-0687">Ribonucleoprotein</keyword>
<keyword id="KW-0689">Ribosomal protein</keyword>
<keyword id="KW-0694">RNA-binding</keyword>
<keyword id="KW-0699">rRNA-binding</keyword>
<keyword id="KW-0820">tRNA-binding</keyword>
<sequence>MLQPKRTKFRKAFKGRIHGAAKGGFELNFGEFGLKAMEPERITARQIEAARRAMTRHMKRAGRVWIRIFPDVPVSKKPTEVRMGKGKGAPEFWAARVAPGRIMFELDGVPADLAREALRLAAAKLPIKTRFIQRIEE</sequence>
<name>RL16_BEII9</name>
<reference key="1">
    <citation type="journal article" date="2010" name="J. Bacteriol.">
        <title>Complete genome sequence of Beijerinckia indica subsp. indica.</title>
        <authorList>
            <person name="Tamas I."/>
            <person name="Dedysh S.N."/>
            <person name="Liesack W."/>
            <person name="Stott M.B."/>
            <person name="Alam M."/>
            <person name="Murrell J.C."/>
            <person name="Dunfield P.F."/>
        </authorList>
    </citation>
    <scope>NUCLEOTIDE SEQUENCE [LARGE SCALE GENOMIC DNA]</scope>
    <source>
        <strain>ATCC 9039 / DSM 1715 / NCIMB 8712</strain>
    </source>
</reference>
<organism>
    <name type="scientific">Beijerinckia indica subsp. indica (strain ATCC 9039 / DSM 1715 / NCIMB 8712)</name>
    <dbReference type="NCBI Taxonomy" id="395963"/>
    <lineage>
        <taxon>Bacteria</taxon>
        <taxon>Pseudomonadati</taxon>
        <taxon>Pseudomonadota</taxon>
        <taxon>Alphaproteobacteria</taxon>
        <taxon>Hyphomicrobiales</taxon>
        <taxon>Beijerinckiaceae</taxon>
        <taxon>Beijerinckia</taxon>
    </lineage>
</organism>
<proteinExistence type="inferred from homology"/>
<protein>
    <recommendedName>
        <fullName evidence="1">Large ribosomal subunit protein uL16</fullName>
    </recommendedName>
    <alternativeName>
        <fullName evidence="2">50S ribosomal protein L16</fullName>
    </alternativeName>
</protein>
<evidence type="ECO:0000255" key="1">
    <source>
        <dbReference type="HAMAP-Rule" id="MF_01342"/>
    </source>
</evidence>
<evidence type="ECO:0000305" key="2"/>
<dbReference type="EMBL" id="CP001016">
    <property type="protein sequence ID" value="ACB95001.1"/>
    <property type="molecule type" value="Genomic_DNA"/>
</dbReference>
<dbReference type="RefSeq" id="WP_012384358.1">
    <property type="nucleotide sequence ID" value="NC_010581.1"/>
</dbReference>
<dbReference type="SMR" id="B2IK69"/>
<dbReference type="STRING" id="395963.Bind_1361"/>
<dbReference type="KEGG" id="bid:Bind_1361"/>
<dbReference type="eggNOG" id="COG0197">
    <property type="taxonomic scope" value="Bacteria"/>
</dbReference>
<dbReference type="HOGENOM" id="CLU_078858_2_1_5"/>
<dbReference type="OrthoDB" id="9802589at2"/>
<dbReference type="Proteomes" id="UP000001695">
    <property type="component" value="Chromosome"/>
</dbReference>
<dbReference type="GO" id="GO:0022625">
    <property type="term" value="C:cytosolic large ribosomal subunit"/>
    <property type="evidence" value="ECO:0007669"/>
    <property type="project" value="TreeGrafter"/>
</dbReference>
<dbReference type="GO" id="GO:0019843">
    <property type="term" value="F:rRNA binding"/>
    <property type="evidence" value="ECO:0007669"/>
    <property type="project" value="UniProtKB-UniRule"/>
</dbReference>
<dbReference type="GO" id="GO:0003735">
    <property type="term" value="F:structural constituent of ribosome"/>
    <property type="evidence" value="ECO:0007669"/>
    <property type="project" value="InterPro"/>
</dbReference>
<dbReference type="GO" id="GO:0000049">
    <property type="term" value="F:tRNA binding"/>
    <property type="evidence" value="ECO:0007669"/>
    <property type="project" value="UniProtKB-KW"/>
</dbReference>
<dbReference type="GO" id="GO:0006412">
    <property type="term" value="P:translation"/>
    <property type="evidence" value="ECO:0007669"/>
    <property type="project" value="UniProtKB-UniRule"/>
</dbReference>
<dbReference type="CDD" id="cd01433">
    <property type="entry name" value="Ribosomal_L16_L10e"/>
    <property type="match status" value="1"/>
</dbReference>
<dbReference type="FunFam" id="3.90.1170.10:FF:000001">
    <property type="entry name" value="50S ribosomal protein L16"/>
    <property type="match status" value="1"/>
</dbReference>
<dbReference type="Gene3D" id="3.90.1170.10">
    <property type="entry name" value="Ribosomal protein L10e/L16"/>
    <property type="match status" value="1"/>
</dbReference>
<dbReference type="HAMAP" id="MF_01342">
    <property type="entry name" value="Ribosomal_uL16"/>
    <property type="match status" value="1"/>
</dbReference>
<dbReference type="InterPro" id="IPR047873">
    <property type="entry name" value="Ribosomal_uL16"/>
</dbReference>
<dbReference type="InterPro" id="IPR000114">
    <property type="entry name" value="Ribosomal_uL16_bact-type"/>
</dbReference>
<dbReference type="InterPro" id="IPR020798">
    <property type="entry name" value="Ribosomal_uL16_CS"/>
</dbReference>
<dbReference type="InterPro" id="IPR016180">
    <property type="entry name" value="Ribosomal_uL16_dom"/>
</dbReference>
<dbReference type="InterPro" id="IPR036920">
    <property type="entry name" value="Ribosomal_uL16_sf"/>
</dbReference>
<dbReference type="NCBIfam" id="TIGR01164">
    <property type="entry name" value="rplP_bact"/>
    <property type="match status" value="1"/>
</dbReference>
<dbReference type="PANTHER" id="PTHR12220">
    <property type="entry name" value="50S/60S RIBOSOMAL PROTEIN L16"/>
    <property type="match status" value="1"/>
</dbReference>
<dbReference type="PANTHER" id="PTHR12220:SF13">
    <property type="entry name" value="LARGE RIBOSOMAL SUBUNIT PROTEIN UL16M"/>
    <property type="match status" value="1"/>
</dbReference>
<dbReference type="Pfam" id="PF00252">
    <property type="entry name" value="Ribosomal_L16"/>
    <property type="match status" value="1"/>
</dbReference>
<dbReference type="PRINTS" id="PR00060">
    <property type="entry name" value="RIBOSOMALL16"/>
</dbReference>
<dbReference type="SUPFAM" id="SSF54686">
    <property type="entry name" value="Ribosomal protein L16p/L10e"/>
    <property type="match status" value="1"/>
</dbReference>
<dbReference type="PROSITE" id="PS00586">
    <property type="entry name" value="RIBOSOMAL_L16_1"/>
    <property type="match status" value="1"/>
</dbReference>
<dbReference type="PROSITE" id="PS00701">
    <property type="entry name" value="RIBOSOMAL_L16_2"/>
    <property type="match status" value="1"/>
</dbReference>